<evidence type="ECO:0000305" key="1"/>
<evidence type="ECO:0000305" key="2">
    <source>
    </source>
</evidence>
<reference key="1">
    <citation type="journal article" date="1994" name="Nature">
        <title>Complete DNA sequence of yeast chromosome XI.</title>
        <authorList>
            <person name="Dujon B."/>
            <person name="Alexandraki D."/>
            <person name="Andre B."/>
            <person name="Ansorge W."/>
            <person name="Baladron V."/>
            <person name="Ballesta J.P.G."/>
            <person name="Banrevi A."/>
            <person name="Bolle P.-A."/>
            <person name="Bolotin-Fukuhara M."/>
            <person name="Bossier P."/>
            <person name="Bou G."/>
            <person name="Boyer J."/>
            <person name="Buitrago M.J."/>
            <person name="Cheret G."/>
            <person name="Colleaux L."/>
            <person name="Daignan-Fornier B."/>
            <person name="del Rey F."/>
            <person name="Dion C."/>
            <person name="Domdey H."/>
            <person name="Duesterhoeft A."/>
            <person name="Duesterhus S."/>
            <person name="Entian K.-D."/>
            <person name="Erfle H."/>
            <person name="Esteban P.F."/>
            <person name="Feldmann H."/>
            <person name="Fernandes L."/>
            <person name="Fobo G.M."/>
            <person name="Fritz C."/>
            <person name="Fukuhara H."/>
            <person name="Gabel C."/>
            <person name="Gaillon L."/>
            <person name="Garcia-Cantalejo J.M."/>
            <person name="Garcia-Ramirez J.J."/>
            <person name="Gent M.E."/>
            <person name="Ghazvini M."/>
            <person name="Goffeau A."/>
            <person name="Gonzalez A."/>
            <person name="Grothues D."/>
            <person name="Guerreiro P."/>
            <person name="Hegemann J.H."/>
            <person name="Hewitt N."/>
            <person name="Hilger F."/>
            <person name="Hollenberg C.P."/>
            <person name="Horaitis O."/>
            <person name="Indge K.J."/>
            <person name="Jacquier A."/>
            <person name="James C.M."/>
            <person name="Jauniaux J.-C."/>
            <person name="Jimenez A."/>
            <person name="Keuchel H."/>
            <person name="Kirchrath L."/>
            <person name="Kleine K."/>
            <person name="Koetter P."/>
            <person name="Legrain P."/>
            <person name="Liebl S."/>
            <person name="Louis E.J."/>
            <person name="Maia e Silva A."/>
            <person name="Marck C."/>
            <person name="Monnier A.-L."/>
            <person name="Moestl D."/>
            <person name="Mueller S."/>
            <person name="Obermaier B."/>
            <person name="Oliver S.G."/>
            <person name="Pallier C."/>
            <person name="Pascolo S."/>
            <person name="Pfeiffer F."/>
            <person name="Philippsen P."/>
            <person name="Planta R.J."/>
            <person name="Pohl F.M."/>
            <person name="Pohl T.M."/>
            <person name="Poehlmann R."/>
            <person name="Portetelle D."/>
            <person name="Purnelle B."/>
            <person name="Puzos V."/>
            <person name="Ramezani Rad M."/>
            <person name="Rasmussen S.W."/>
            <person name="Remacha M.A."/>
            <person name="Revuelta J.L."/>
            <person name="Richard G.-F."/>
            <person name="Rieger M."/>
            <person name="Rodrigues-Pousada C."/>
            <person name="Rose M."/>
            <person name="Rupp T."/>
            <person name="Santos M.A."/>
            <person name="Schwager C."/>
            <person name="Sensen C."/>
            <person name="Skala J."/>
            <person name="Soares H."/>
            <person name="Sor F."/>
            <person name="Stegemann J."/>
            <person name="Tettelin H."/>
            <person name="Thierry A."/>
            <person name="Tzermia M."/>
            <person name="Urrestarazu L.A."/>
            <person name="van Dyck L."/>
            <person name="van Vliet-Reedijk J.C."/>
            <person name="Valens M."/>
            <person name="Vandenbol M."/>
            <person name="Vilela C."/>
            <person name="Vissers S."/>
            <person name="von Wettstein D."/>
            <person name="Voss H."/>
            <person name="Wiemann S."/>
            <person name="Xu G."/>
            <person name="Zimmermann J."/>
            <person name="Haasemann M."/>
            <person name="Becker I."/>
            <person name="Mewes H.-W."/>
        </authorList>
    </citation>
    <scope>NUCLEOTIDE SEQUENCE [LARGE SCALE GENOMIC DNA]</scope>
    <source>
        <strain>ATCC 204508 / S288c</strain>
    </source>
</reference>
<reference key="2">
    <citation type="journal article" date="2014" name="G3 (Bethesda)">
        <title>The reference genome sequence of Saccharomyces cerevisiae: Then and now.</title>
        <authorList>
            <person name="Engel S.R."/>
            <person name="Dietrich F.S."/>
            <person name="Fisk D.G."/>
            <person name="Binkley G."/>
            <person name="Balakrishnan R."/>
            <person name="Costanzo M.C."/>
            <person name="Dwight S.S."/>
            <person name="Hitz B.C."/>
            <person name="Karra K."/>
            <person name="Nash R.S."/>
            <person name="Weng S."/>
            <person name="Wong E.D."/>
            <person name="Lloyd P."/>
            <person name="Skrzypek M.S."/>
            <person name="Miyasato S.R."/>
            <person name="Simison M."/>
            <person name="Cherry J.M."/>
        </authorList>
    </citation>
    <scope>GENOME REANNOTATION</scope>
    <source>
        <strain>ATCC 204508 / S288c</strain>
    </source>
</reference>
<gene>
    <name type="ordered locus">YKR012C</name>
</gene>
<organism>
    <name type="scientific">Saccharomyces cerevisiae (strain ATCC 204508 / S288c)</name>
    <name type="common">Baker's yeast</name>
    <dbReference type="NCBI Taxonomy" id="559292"/>
    <lineage>
        <taxon>Eukaryota</taxon>
        <taxon>Fungi</taxon>
        <taxon>Dikarya</taxon>
        <taxon>Ascomycota</taxon>
        <taxon>Saccharomycotina</taxon>
        <taxon>Saccharomycetes</taxon>
        <taxon>Saccharomycetales</taxon>
        <taxon>Saccharomycetaceae</taxon>
        <taxon>Saccharomyces</taxon>
    </lineage>
</organism>
<dbReference type="EMBL" id="Z28237">
    <property type="protein sequence ID" value="CAA82082.1"/>
    <property type="molecule type" value="Genomic_DNA"/>
</dbReference>
<dbReference type="EMBL" id="Z28238">
    <property type="protein sequence ID" value="CAA82085.1"/>
    <property type="molecule type" value="Genomic_DNA"/>
</dbReference>
<dbReference type="PIR" id="S38081">
    <property type="entry name" value="S38081"/>
</dbReference>
<dbReference type="PaxDb" id="4932-YKR012C"/>
<dbReference type="AGR" id="SGD:S000001720"/>
<dbReference type="SGD" id="S000001720">
    <property type="gene designation" value="YKR012C"/>
</dbReference>
<dbReference type="HOGENOM" id="CLU_1994403_0_0_1"/>
<feature type="chain" id="PRO_0000203195" description="Putative uncharacterized protein YKR012C">
    <location>
        <begin position="1"/>
        <end position="125"/>
    </location>
</feature>
<sequence length="125" mass="14331">MNVVRVWPFSTRTIPCTTTVAAWWTCCVTVTATGADKATDADAASSETLENFIFVSFIKGMVLFYDGLFRGTMIPRANRSITAICNTLRQAYIYTKIQSIAFERRLCFQNITYREVREIHEMYCK</sequence>
<proteinExistence type="uncertain"/>
<comment type="miscellaneous">
    <text evidence="1">Partially overlaps PRY2.</text>
</comment>
<comment type="caution">
    <text evidence="2">Product of a dubious gene prediction unlikely to encode a functional protein. Because of that it is not part of the S.cerevisiae S288c complete/reference proteome set.</text>
</comment>
<name>YKZ2_YEAST</name>
<accession>P36109</accession>
<protein>
    <recommendedName>
        <fullName>Putative uncharacterized protein YKR012C</fullName>
    </recommendedName>
</protein>